<gene>
    <name type="primary">tnaL</name>
    <name type="ordered locus">Z5202</name>
    <name type="ordered locus">ECs4644</name>
</gene>
<reference key="1">
    <citation type="journal article" date="2001" name="Nature">
        <title>Genome sequence of enterohaemorrhagic Escherichia coli O157:H7.</title>
        <authorList>
            <person name="Perna N.T."/>
            <person name="Plunkett G. III"/>
            <person name="Burland V."/>
            <person name="Mau B."/>
            <person name="Glasner J.D."/>
            <person name="Rose D.J."/>
            <person name="Mayhew G.F."/>
            <person name="Evans P.S."/>
            <person name="Gregor J."/>
            <person name="Kirkpatrick H.A."/>
            <person name="Posfai G."/>
            <person name="Hackett J."/>
            <person name="Klink S."/>
            <person name="Boutin A."/>
            <person name="Shao Y."/>
            <person name="Miller L."/>
            <person name="Grotbeck E.J."/>
            <person name="Davis N.W."/>
            <person name="Lim A."/>
            <person name="Dimalanta E.T."/>
            <person name="Potamousis K."/>
            <person name="Apodaca J."/>
            <person name="Anantharaman T.S."/>
            <person name="Lin J."/>
            <person name="Yen G."/>
            <person name="Schwartz D.C."/>
            <person name="Welch R.A."/>
            <person name="Blattner F.R."/>
        </authorList>
    </citation>
    <scope>NUCLEOTIDE SEQUENCE [LARGE SCALE GENOMIC DNA]</scope>
    <source>
        <strain>O157:H7 / EDL933 / ATCC 700927 / EHEC</strain>
    </source>
</reference>
<reference key="2">
    <citation type="journal article" date="2001" name="DNA Res.">
        <title>Complete genome sequence of enterohemorrhagic Escherichia coli O157:H7 and genomic comparison with a laboratory strain K-12.</title>
        <authorList>
            <person name="Hayashi T."/>
            <person name="Makino K."/>
            <person name="Ohnishi M."/>
            <person name="Kurokawa K."/>
            <person name="Ishii K."/>
            <person name="Yokoyama K."/>
            <person name="Han C.-G."/>
            <person name="Ohtsubo E."/>
            <person name="Nakayama K."/>
            <person name="Murata T."/>
            <person name="Tanaka M."/>
            <person name="Tobe T."/>
            <person name="Iida T."/>
            <person name="Takami H."/>
            <person name="Honda T."/>
            <person name="Sasakawa C."/>
            <person name="Ogasawara N."/>
            <person name="Yasunaga T."/>
            <person name="Kuhara S."/>
            <person name="Shiba T."/>
            <person name="Hattori M."/>
            <person name="Shinagawa H."/>
        </authorList>
    </citation>
    <scope>NUCLEOTIDE SEQUENCE [LARGE SCALE GENOMIC DNA]</scope>
    <source>
        <strain>O157:H7 / Sakai / RIMD 0509952 / EHEC</strain>
    </source>
</reference>
<name>LPTN_ECO57</name>
<dbReference type="EMBL" id="AE005174">
    <property type="protein sequence ID" value="AAG58907.1"/>
    <property type="molecule type" value="Genomic_DNA"/>
</dbReference>
<dbReference type="EMBL" id="BA000007">
    <property type="protein sequence ID" value="BAB38067.1"/>
    <property type="molecule type" value="Genomic_DNA"/>
</dbReference>
<dbReference type="PIR" id="D91209">
    <property type="entry name" value="D91209"/>
</dbReference>
<dbReference type="PIR" id="G86055">
    <property type="entry name" value="G86055"/>
</dbReference>
<dbReference type="SMR" id="P0AD91"/>
<dbReference type="STRING" id="155864.Z5202"/>
<dbReference type="KEGG" id="ece:Z5202"/>
<dbReference type="KEGG" id="ecs:ECs_4644"/>
<dbReference type="HOGENOM" id="CLU_221068_0_0_6"/>
<dbReference type="Proteomes" id="UP000000558">
    <property type="component" value="Chromosome"/>
</dbReference>
<dbReference type="Proteomes" id="UP000002519">
    <property type="component" value="Chromosome"/>
</dbReference>
<dbReference type="GO" id="GO:0031556">
    <property type="term" value="P:transcriptional attenuation by ribosome"/>
    <property type="evidence" value="ECO:0007669"/>
    <property type="project" value="InterPro"/>
</dbReference>
<dbReference type="InterPro" id="IPR012620">
    <property type="entry name" value="Trp_operon_leader_peptide"/>
</dbReference>
<dbReference type="NCBIfam" id="TIGR02616">
    <property type="entry name" value="tnaC_leader"/>
    <property type="match status" value="1"/>
</dbReference>
<dbReference type="Pfam" id="PF08053">
    <property type="entry name" value="Tna_leader"/>
    <property type="match status" value="1"/>
</dbReference>
<organism>
    <name type="scientific">Escherichia coli O157:H7</name>
    <dbReference type="NCBI Taxonomy" id="83334"/>
    <lineage>
        <taxon>Bacteria</taxon>
        <taxon>Pseudomonadati</taxon>
        <taxon>Pseudomonadota</taxon>
        <taxon>Gammaproteobacteria</taxon>
        <taxon>Enterobacterales</taxon>
        <taxon>Enterobacteriaceae</taxon>
        <taxon>Escherichia</taxon>
    </lineage>
</organism>
<sequence length="24" mass="2894">MNILHICVTSKWFNIDNKIVDHRP</sequence>
<protein>
    <recommendedName>
        <fullName>Tryptophanase operon leader peptide</fullName>
    </recommendedName>
</protein>
<proteinExistence type="predicted"/>
<accession>P0AD91</accession>
<accession>P09408</accession>
<keyword id="KW-0428">Leader peptide</keyword>
<keyword id="KW-1185">Reference proteome</keyword>
<feature type="peptide" id="PRO_0000044012" description="Tryptophanase operon leader peptide">
    <location>
        <begin position="1"/>
        <end position="24"/>
    </location>
</feature>